<organism>
    <name type="scientific">Leptospira interrogans serogroup Icterohaemorrhagiae serovar Lai (strain 56601)</name>
    <dbReference type="NCBI Taxonomy" id="189518"/>
    <lineage>
        <taxon>Bacteria</taxon>
        <taxon>Pseudomonadati</taxon>
        <taxon>Spirochaetota</taxon>
        <taxon>Spirochaetia</taxon>
        <taxon>Leptospirales</taxon>
        <taxon>Leptospiraceae</taxon>
        <taxon>Leptospira</taxon>
    </lineage>
</organism>
<protein>
    <recommendedName>
        <fullName>Chaperone protein DnaK</fullName>
    </recommendedName>
    <alternativeName>
        <fullName>HSP70</fullName>
    </alternativeName>
    <alternativeName>
        <fullName>Heat shock 70 kDa protein</fullName>
    </alternativeName>
    <alternativeName>
        <fullName>Heat shock protein 70</fullName>
    </alternativeName>
</protein>
<reference key="1">
    <citation type="journal article" date="2003" name="Nature">
        <title>Unique physiological and pathogenic features of Leptospira interrogans revealed by whole-genome sequencing.</title>
        <authorList>
            <person name="Ren S.-X."/>
            <person name="Fu G."/>
            <person name="Jiang X.-G."/>
            <person name="Zeng R."/>
            <person name="Miao Y.-G."/>
            <person name="Xu H."/>
            <person name="Zhang Y.-X."/>
            <person name="Xiong H."/>
            <person name="Lu G."/>
            <person name="Lu L.-F."/>
            <person name="Jiang H.-Q."/>
            <person name="Jia J."/>
            <person name="Tu Y.-F."/>
            <person name="Jiang J.-X."/>
            <person name="Gu W.-Y."/>
            <person name="Zhang Y.-Q."/>
            <person name="Cai Z."/>
            <person name="Sheng H.-H."/>
            <person name="Yin H.-F."/>
            <person name="Zhang Y."/>
            <person name="Zhu G.-F."/>
            <person name="Wan M."/>
            <person name="Huang H.-L."/>
            <person name="Qian Z."/>
            <person name="Wang S.-Y."/>
            <person name="Ma W."/>
            <person name="Yao Z.-J."/>
            <person name="Shen Y."/>
            <person name="Qiang B.-Q."/>
            <person name="Xia Q.-C."/>
            <person name="Guo X.-K."/>
            <person name="Danchin A."/>
            <person name="Saint Girons I."/>
            <person name="Somerville R.L."/>
            <person name="Wen Y.-M."/>
            <person name="Shi M.-H."/>
            <person name="Chen Z."/>
            <person name="Xu J.-G."/>
            <person name="Zhao G.-P."/>
        </authorList>
    </citation>
    <scope>NUCLEOTIDE SEQUENCE [LARGE SCALE GENOMIC DNA]</scope>
    <source>
        <strain>56601</strain>
    </source>
</reference>
<reference key="2">
    <citation type="submission" date="1996-09" db="EMBL/GenBank/DDBJ databases">
        <authorList>
            <person name="Gul B."/>
            <person name="Yelton D."/>
        </authorList>
    </citation>
    <scope>NUCLEOTIDE SEQUENCE [GENOMIC DNA] OF 158-645</scope>
    <source>
        <strain>Serogroup Pomona</strain>
    </source>
</reference>
<name>DNAK_LEPIN</name>
<keyword id="KW-0067">ATP-binding</keyword>
<keyword id="KW-0143">Chaperone</keyword>
<keyword id="KW-0547">Nucleotide-binding</keyword>
<keyword id="KW-0597">Phosphoprotein</keyword>
<keyword id="KW-1185">Reference proteome</keyword>
<keyword id="KW-0346">Stress response</keyword>
<accession>P61443</accession>
<accession>O51869</accession>
<accession>P71442</accession>
<feature type="chain" id="PRO_0000078481" description="Chaperone protein DnaK">
    <location>
        <begin position="1"/>
        <end position="646"/>
    </location>
</feature>
<feature type="region of interest" description="Disordered" evidence="2">
    <location>
        <begin position="598"/>
        <end position="646"/>
    </location>
</feature>
<feature type="compositionally biased region" description="Low complexity" evidence="2">
    <location>
        <begin position="600"/>
        <end position="621"/>
    </location>
</feature>
<feature type="modified residue" description="Phosphothreonine; by autocatalysis" evidence="1">
    <location>
        <position position="199"/>
    </location>
</feature>
<feature type="sequence conflict" description="In Ref. 2; AAB17395." evidence="3" ref="2">
    <original>DASG</original>
    <variation>EPSR</variation>
    <location>
        <begin position="285"/>
        <end position="288"/>
    </location>
</feature>
<feature type="sequence conflict" description="In Ref. 2; AAB17395." evidence="3" ref="2">
    <original>DM</original>
    <variation>EL</variation>
    <location>
        <begin position="293"/>
        <end position="294"/>
    </location>
</feature>
<feature type="sequence conflict" description="In Ref. 2; AAB17395." evidence="3" ref="2">
    <original>Q</original>
    <variation>QD</variation>
    <location>
        <position position="303"/>
    </location>
</feature>
<feature type="sequence conflict" description="In Ref. 2; AAB17395." evidence="3" ref="2">
    <original>NA</original>
    <variation>KH</variation>
    <location>
        <begin position="318"/>
        <end position="319"/>
    </location>
</feature>
<feature type="sequence conflict" description="In Ref. 2; AAB17395." evidence="3" ref="2">
    <original>SI</original>
    <variation>GL</variation>
    <location>
        <begin position="339"/>
        <end position="340"/>
    </location>
</feature>
<feature type="sequence conflict" description="In Ref. 2; AAB17395." evidence="3" ref="2">
    <original>G</original>
    <variation>E</variation>
    <location>
        <position position="605"/>
    </location>
</feature>
<feature type="sequence conflict" description="In Ref. 2; AAB17395." evidence="3" ref="2">
    <original>A</original>
    <variation>T</variation>
    <location>
        <position position="618"/>
    </location>
</feature>
<evidence type="ECO:0000250" key="1"/>
<evidence type="ECO:0000256" key="2">
    <source>
        <dbReference type="SAM" id="MobiDB-lite"/>
    </source>
</evidence>
<evidence type="ECO:0000305" key="3"/>
<sequence length="646" mass="69129">MSKEKIIGIDLGTTNSVVSVMEGGDPVVIQNSEGARTTPSIVAFTAKGETLIGQFAKNQAITNAVNTIRSAKRFIGRRLNECESEMKHVSYKVIRSGNEGVKFETSAGEFTPQEISARVLMKMKQTAEDYLGQKVTKAVITVPAYFNDEQRQATKDAGRIAGLEVERIINEPTAAALAYGFDKKNVNSKIAVYDLGGGTFDISILELADGVFEVKSTNGDTHLGGDDFDMAIMEWMISEFKNQTGIDISADKNTVQRLKEAAEKAKIELSGTMSTQINLPFITADASGPKHLDMTLTRAKFDQLTKSLVDRTRIPCENALRDAGLKASDINEVILVGGSIRIPAVQELVKQVFGKEPNKSVNPDEVVAIGAAIQGGVLAGEVSDVLLLDVTPLSLGIETLGGVMTKLIERNTTIPTKKSQVFSTAADNQSAVSIHVLQGEREMASANRTLGRFDLIGIPPAPRGVPQIEVTFDIDANGIVHVSAKDLGTGKEQKIRIESSSGLSEDEIQKMVKDAEAHAAADKAQREVIEAKNELDTLTYSLEKTVNEAGDKIGANEKQLATDEIKRAREAIESNDKARIESAKASISKIATDIASKVYSQSAPGAEQAAAGGPNGSAGSNDQGNSTNNGEKVVDADYTVVDDEKK</sequence>
<dbReference type="EMBL" id="AE010300">
    <property type="protein sequence ID" value="AAN50903.1"/>
    <property type="molecule type" value="Genomic_DNA"/>
</dbReference>
<dbReference type="EMBL" id="U72647">
    <property type="protein sequence ID" value="AAB17395.1"/>
    <property type="molecule type" value="Genomic_DNA"/>
</dbReference>
<dbReference type="RefSeq" id="NP_713885.1">
    <property type="nucleotide sequence ID" value="NC_004342.2"/>
</dbReference>
<dbReference type="RefSeq" id="WP_000031822.1">
    <property type="nucleotide sequence ID" value="NC_004342.2"/>
</dbReference>
<dbReference type="SMR" id="P61443"/>
<dbReference type="FunCoup" id="P61443">
    <property type="interactions" value="549"/>
</dbReference>
<dbReference type="STRING" id="189518.LA_3705"/>
<dbReference type="PaxDb" id="189518-LA_3705"/>
<dbReference type="EnsemblBacteria" id="AAN50903">
    <property type="protein sequence ID" value="AAN50903"/>
    <property type="gene ID" value="LA_3705"/>
</dbReference>
<dbReference type="KEGG" id="lil:LA_3705"/>
<dbReference type="PATRIC" id="fig|189518.3.peg.3680"/>
<dbReference type="HOGENOM" id="CLU_005965_2_1_12"/>
<dbReference type="InParanoid" id="P61443"/>
<dbReference type="OrthoDB" id="9766019at2"/>
<dbReference type="Proteomes" id="UP000001408">
    <property type="component" value="Chromosome I"/>
</dbReference>
<dbReference type="GO" id="GO:0005524">
    <property type="term" value="F:ATP binding"/>
    <property type="evidence" value="ECO:0007669"/>
    <property type="project" value="UniProtKB-UniRule"/>
</dbReference>
<dbReference type="GO" id="GO:0016887">
    <property type="term" value="F:ATP hydrolysis activity"/>
    <property type="evidence" value="ECO:0000318"/>
    <property type="project" value="GO_Central"/>
</dbReference>
<dbReference type="GO" id="GO:0140662">
    <property type="term" value="F:ATP-dependent protein folding chaperone"/>
    <property type="evidence" value="ECO:0007669"/>
    <property type="project" value="InterPro"/>
</dbReference>
<dbReference type="GO" id="GO:0031072">
    <property type="term" value="F:heat shock protein binding"/>
    <property type="evidence" value="ECO:0000318"/>
    <property type="project" value="GO_Central"/>
</dbReference>
<dbReference type="GO" id="GO:0044183">
    <property type="term" value="F:protein folding chaperone"/>
    <property type="evidence" value="ECO:0000318"/>
    <property type="project" value="GO_Central"/>
</dbReference>
<dbReference type="GO" id="GO:0051082">
    <property type="term" value="F:unfolded protein binding"/>
    <property type="evidence" value="ECO:0007669"/>
    <property type="project" value="InterPro"/>
</dbReference>
<dbReference type="GO" id="GO:0051085">
    <property type="term" value="P:chaperone cofactor-dependent protein refolding"/>
    <property type="evidence" value="ECO:0000318"/>
    <property type="project" value="GO_Central"/>
</dbReference>
<dbReference type="GO" id="GO:0042026">
    <property type="term" value="P:protein refolding"/>
    <property type="evidence" value="ECO:0000318"/>
    <property type="project" value="GO_Central"/>
</dbReference>
<dbReference type="CDD" id="cd10234">
    <property type="entry name" value="ASKHA_NBD_HSP70_DnaK-like"/>
    <property type="match status" value="1"/>
</dbReference>
<dbReference type="FunFam" id="2.60.34.10:FF:000014">
    <property type="entry name" value="Chaperone protein DnaK HSP70"/>
    <property type="match status" value="1"/>
</dbReference>
<dbReference type="FunFam" id="3.30.420.40:FF:000020">
    <property type="entry name" value="Chaperone protein HscA homolog"/>
    <property type="match status" value="1"/>
</dbReference>
<dbReference type="FunFam" id="1.20.1270.10:FF:000001">
    <property type="entry name" value="Molecular chaperone DnaK"/>
    <property type="match status" value="1"/>
</dbReference>
<dbReference type="FunFam" id="3.30.420.40:FF:000004">
    <property type="entry name" value="Molecular chaperone DnaK"/>
    <property type="match status" value="1"/>
</dbReference>
<dbReference type="FunFam" id="3.90.640.10:FF:000003">
    <property type="entry name" value="Molecular chaperone DnaK"/>
    <property type="match status" value="1"/>
</dbReference>
<dbReference type="Gene3D" id="1.20.1270.10">
    <property type="match status" value="1"/>
</dbReference>
<dbReference type="Gene3D" id="3.30.420.40">
    <property type="match status" value="2"/>
</dbReference>
<dbReference type="Gene3D" id="3.90.640.10">
    <property type="entry name" value="Actin, Chain A, domain 4"/>
    <property type="match status" value="1"/>
</dbReference>
<dbReference type="Gene3D" id="2.60.34.10">
    <property type="entry name" value="Substrate Binding Domain Of DNAk, Chain A, domain 1"/>
    <property type="match status" value="1"/>
</dbReference>
<dbReference type="HAMAP" id="MF_00332">
    <property type="entry name" value="DnaK"/>
    <property type="match status" value="1"/>
</dbReference>
<dbReference type="InterPro" id="IPR043129">
    <property type="entry name" value="ATPase_NBD"/>
</dbReference>
<dbReference type="InterPro" id="IPR012725">
    <property type="entry name" value="Chaperone_DnaK"/>
</dbReference>
<dbReference type="InterPro" id="IPR018181">
    <property type="entry name" value="Heat_shock_70_CS"/>
</dbReference>
<dbReference type="InterPro" id="IPR029048">
    <property type="entry name" value="HSP70_C_sf"/>
</dbReference>
<dbReference type="InterPro" id="IPR029047">
    <property type="entry name" value="HSP70_peptide-bd_sf"/>
</dbReference>
<dbReference type="InterPro" id="IPR013126">
    <property type="entry name" value="Hsp_70_fam"/>
</dbReference>
<dbReference type="NCBIfam" id="NF001413">
    <property type="entry name" value="PRK00290.1"/>
    <property type="match status" value="1"/>
</dbReference>
<dbReference type="NCBIfam" id="NF003520">
    <property type="entry name" value="PRK05183.1"/>
    <property type="match status" value="1"/>
</dbReference>
<dbReference type="NCBIfam" id="TIGR02350">
    <property type="entry name" value="prok_dnaK"/>
    <property type="match status" value="1"/>
</dbReference>
<dbReference type="PANTHER" id="PTHR19375">
    <property type="entry name" value="HEAT SHOCK PROTEIN 70KDA"/>
    <property type="match status" value="1"/>
</dbReference>
<dbReference type="Pfam" id="PF00012">
    <property type="entry name" value="HSP70"/>
    <property type="match status" value="1"/>
</dbReference>
<dbReference type="PRINTS" id="PR00301">
    <property type="entry name" value="HEATSHOCK70"/>
</dbReference>
<dbReference type="SUPFAM" id="SSF53067">
    <property type="entry name" value="Actin-like ATPase domain"/>
    <property type="match status" value="2"/>
</dbReference>
<dbReference type="SUPFAM" id="SSF100934">
    <property type="entry name" value="Heat shock protein 70kD (HSP70), C-terminal subdomain"/>
    <property type="match status" value="1"/>
</dbReference>
<dbReference type="SUPFAM" id="SSF100920">
    <property type="entry name" value="Heat shock protein 70kD (HSP70), peptide-binding domain"/>
    <property type="match status" value="1"/>
</dbReference>
<dbReference type="PROSITE" id="PS00297">
    <property type="entry name" value="HSP70_1"/>
    <property type="match status" value="1"/>
</dbReference>
<dbReference type="PROSITE" id="PS00329">
    <property type="entry name" value="HSP70_2"/>
    <property type="match status" value="1"/>
</dbReference>
<proteinExistence type="inferred from homology"/>
<gene>
    <name type="primary">dnaK</name>
    <name type="ordered locus">LA_3705</name>
</gene>
<comment type="function">
    <text evidence="1">Acts as a chaperone.</text>
</comment>
<comment type="induction">
    <text evidence="1">By stress conditions e.g. heat shock (By similarity).</text>
</comment>
<comment type="similarity">
    <text evidence="3">Belongs to the heat shock protein 70 family.</text>
</comment>